<proteinExistence type="inferred from homology"/>
<evidence type="ECO:0000255" key="1">
    <source>
        <dbReference type="HAMAP-Rule" id="MF_01003"/>
    </source>
</evidence>
<sequence>MSLMQFSGLLVVWLLSTLFIATLTWFEFRRVRFNFNVFFSLLFLLTFFFGFPLTSVLVFRFDVGVAPPEILLQALLSAACFYGVYYVTYKTRLRKRVVDVPRKPLFTMNRVETHLTWVILMGIALVSVAIFFMHNGFLLFRLHSYSQIFSSEVSGVALKRFFYFFIPAMLVVYFLRQDSKAWLFFLVSTVAFGLLTYMIVGGTRANIIIAFAIFLFIGIIRGWISLWMLAAAGVLGIVGMFWLALKRYGLNVSGDEAFYTFLYLTRDTFSPWENLALLLQNYHNIDFQGLAPIVRDFYVFIPTWLWPGRPSIVLNSANYFTWEVLNNHSGLAISPTLIGSLVVMGGALFIPLGAIVVGLIIKWFDWLYELGNREPNRYKAAILHSFCFGAIFNMIVLAREGLDSFVSRVVFFLVVFGASLLVAKLLFWLFDSAGLIHKRTTSLPQAQVEGKL</sequence>
<name>WZYE_SALHS</name>
<accession>B4TB26</accession>
<dbReference type="EMBL" id="CP001120">
    <property type="protein sequence ID" value="ACF69242.1"/>
    <property type="molecule type" value="Genomic_DNA"/>
</dbReference>
<dbReference type="RefSeq" id="WP_000055605.1">
    <property type="nucleotide sequence ID" value="NC_011083.1"/>
</dbReference>
<dbReference type="KEGG" id="seh:SeHA_C4257"/>
<dbReference type="HOGENOM" id="CLU_049711_0_0_6"/>
<dbReference type="UniPathway" id="UPA00566"/>
<dbReference type="Proteomes" id="UP000001866">
    <property type="component" value="Chromosome"/>
</dbReference>
<dbReference type="GO" id="GO:0005886">
    <property type="term" value="C:plasma membrane"/>
    <property type="evidence" value="ECO:0007669"/>
    <property type="project" value="UniProtKB-SubCell"/>
</dbReference>
<dbReference type="GO" id="GO:0009246">
    <property type="term" value="P:enterobacterial common antigen biosynthetic process"/>
    <property type="evidence" value="ECO:0007669"/>
    <property type="project" value="UniProtKB-UniRule"/>
</dbReference>
<dbReference type="HAMAP" id="MF_01003">
    <property type="entry name" value="WzyE"/>
    <property type="match status" value="1"/>
</dbReference>
<dbReference type="InterPro" id="IPR010691">
    <property type="entry name" value="WzyE"/>
</dbReference>
<dbReference type="NCBIfam" id="NF002820">
    <property type="entry name" value="PRK02975.1"/>
    <property type="match status" value="1"/>
</dbReference>
<dbReference type="Pfam" id="PF06899">
    <property type="entry name" value="WzyE"/>
    <property type="match status" value="1"/>
</dbReference>
<feature type="chain" id="PRO_1000200216" description="Probable ECA polymerase">
    <location>
        <begin position="1"/>
        <end position="452"/>
    </location>
</feature>
<feature type="transmembrane region" description="Helical" evidence="1">
    <location>
        <begin position="6"/>
        <end position="26"/>
    </location>
</feature>
<feature type="transmembrane region" description="Helical" evidence="1">
    <location>
        <begin position="37"/>
        <end position="57"/>
    </location>
</feature>
<feature type="transmembrane region" description="Helical" evidence="1">
    <location>
        <begin position="63"/>
        <end position="83"/>
    </location>
</feature>
<feature type="transmembrane region" description="Helical" evidence="1">
    <location>
        <begin position="118"/>
        <end position="138"/>
    </location>
</feature>
<feature type="transmembrane region" description="Helical" evidence="1">
    <location>
        <begin position="155"/>
        <end position="175"/>
    </location>
</feature>
<feature type="transmembrane region" description="Helical" evidence="1">
    <location>
        <begin position="181"/>
        <end position="201"/>
    </location>
</feature>
<feature type="transmembrane region" description="Helical" evidence="1">
    <location>
        <begin position="207"/>
        <end position="227"/>
    </location>
</feature>
<feature type="transmembrane region" description="Helical" evidence="1">
    <location>
        <begin position="228"/>
        <end position="248"/>
    </location>
</feature>
<feature type="transmembrane region" description="Helical" evidence="1">
    <location>
        <begin position="341"/>
        <end position="361"/>
    </location>
</feature>
<feature type="transmembrane region" description="Helical" evidence="1">
    <location>
        <begin position="378"/>
        <end position="398"/>
    </location>
</feature>
<feature type="transmembrane region" description="Helical" evidence="1">
    <location>
        <begin position="410"/>
        <end position="430"/>
    </location>
</feature>
<protein>
    <recommendedName>
        <fullName evidence="1">Probable ECA polymerase</fullName>
    </recommendedName>
</protein>
<comment type="function">
    <text evidence="1">Probably involved in the polymerization of enterobacterial common antigen (ECA) trisaccharide repeat units.</text>
</comment>
<comment type="pathway">
    <text evidence="1">Bacterial outer membrane biogenesis; enterobacterial common antigen biosynthesis.</text>
</comment>
<comment type="subunit">
    <text evidence="1">Probably part of a complex composed of WzxE, WzyE and WzzE.</text>
</comment>
<comment type="subcellular location">
    <subcellularLocation>
        <location evidence="1">Cell inner membrane</location>
        <topology evidence="1">Multi-pass membrane protein</topology>
    </subcellularLocation>
</comment>
<comment type="similarity">
    <text evidence="1">Belongs to the WzyE family.</text>
</comment>
<organism>
    <name type="scientific">Salmonella heidelberg (strain SL476)</name>
    <dbReference type="NCBI Taxonomy" id="454169"/>
    <lineage>
        <taxon>Bacteria</taxon>
        <taxon>Pseudomonadati</taxon>
        <taxon>Pseudomonadota</taxon>
        <taxon>Gammaproteobacteria</taxon>
        <taxon>Enterobacterales</taxon>
        <taxon>Enterobacteriaceae</taxon>
        <taxon>Salmonella</taxon>
    </lineage>
</organism>
<gene>
    <name evidence="1" type="primary">wzyE</name>
    <name type="ordered locus">SeHA_C4257</name>
</gene>
<keyword id="KW-0997">Cell inner membrane</keyword>
<keyword id="KW-1003">Cell membrane</keyword>
<keyword id="KW-0472">Membrane</keyword>
<keyword id="KW-0812">Transmembrane</keyword>
<keyword id="KW-1133">Transmembrane helix</keyword>
<reference key="1">
    <citation type="journal article" date="2011" name="J. Bacteriol.">
        <title>Comparative genomics of 28 Salmonella enterica isolates: evidence for CRISPR-mediated adaptive sublineage evolution.</title>
        <authorList>
            <person name="Fricke W.F."/>
            <person name="Mammel M.K."/>
            <person name="McDermott P.F."/>
            <person name="Tartera C."/>
            <person name="White D.G."/>
            <person name="Leclerc J.E."/>
            <person name="Ravel J."/>
            <person name="Cebula T.A."/>
        </authorList>
    </citation>
    <scope>NUCLEOTIDE SEQUENCE [LARGE SCALE GENOMIC DNA]</scope>
    <source>
        <strain>SL476</strain>
    </source>
</reference>